<sequence>MAASERRAFAHKINRTVAAEVRKQVSRERSGSPHSSRRSSSSLGVPLTEVIEPLDFEDVLLSRPPEVEPGPLRDLIEFPVDDLELLKQPRECRTTESGVPEDGQLDAQVRAAVEMYSEDWVIVRRRYQHLSTAYSPITTETQREWQKGLTCQVFEQDTPGDERTGPEDVDDPQHCSGSPEDTPRSSGASGIFSLRNLAADSLLPTLLEQAAPEDVDRRNEALRRQHRAPTLLTLYPAPDEDEAVERCSRPEPPREHFGQRILVKCLSLKFEIEIEPIFGTLALYDVREKKKISENFYFDLNSDSVKGLLRAHGTHPAISTLARSAIFSVTYPSPDIFLVVKLEKVLQQGDISECCEPYMVMKEADTAKNKEKLEKLRLAAEQFCTRLGRYRMPFAWTAVHLANIVSRPQDRDSDSEGERRPTWAERRRRGPQDRGYSGDDACSFSSFRPATLTVTNFFKQEAERLSDEDLFKFLADMRRPSSLLRRLRPVTAQLKLDISPAPENLHFCLSPDLLHVKPYPDPRGRPTKEILEFPAREVYAPHSCYRNLLFVYPHSLNFSSRQGSVRNLAVRIQYMAGEDQSQALPVIFGKSSCSEFTREAFTPVVYHNKSPEFYEEFKLRLPACVTENHHLFFTFYHVSCQPRPGTALETPVGFTWIPLLQHGRLRTGPFCLPVSVDQPPPSYSVLTPDVALPGMRWVDGHKGVFSVELTAVSSVHPQDPHLDKFFTLVHVLEEGIFPFRLKETVLSEGTMEQELRASLAALRLASPEPLVAFSHLVLDKLVRLVVRPPIICGQMVNLGRGAFEAMAHVASLVHRNLEAVQDSRGHCPLLASYVHYAFRLPGGDLSLPGEAPPATVQAATLARGSGRPASLYLARSKSISSSNPDLAVVPGSVDDEVSRILASKGVDRSHSWVNSAYAPGGSKAVLRRVPPYCGADPRQLLHEELALQWVVSGSAVRELVLQHAWFFFQLMVKSMELHLLLGQRLDTPRKLRFPGRFLDDIAALVASVGLEVITRVHKDMKLAERLNASLAFFLSDLLSIADRGYIFSLVRAHYKQVATRLQSAPNPTALLTLRMDFTRILCSHEHYVTLNLPCCPLSPPASPSPSVSSTTSQSSTFSSQAPDPKVTSMFELSGPFRQQHFLSGLLLTELALALDPEAEGASLLHKKAISAVHSLLCSHDVDSRYAEATVKAKVAELYLPLLSLARDTLPQLHGFAEGSGQRSRLASMLDSDTEGEGDIGSTINPSVAMAIAGGPLAPGSRTSISQGPSTAARSGCPLSAESSRTLLVCVLWVLKNAEPTLLQRWAADLALPQLGRLLDLLYLCLAAFEYKGKKAFERINSLTFKKSLDMKARLEEAILGTIGARQEMVRRSRERSPFGNQENVRWRKSATHWRQTSDRVDKTKDEMEHEALVDGNLATEASLVVLDTLETIVQTVMLSEARESILSAVLKVVLYSLGSAQSALFLQHGLATQRALVSKFPELLFEEDTELCADLCLRLLRHCGSRISTIRMHASASLYLLMRQNFEIGHNFARVKMLVTMSLSSLVGTTQNFSEEHLRKSLKTILTYAEEDIGLRDSTFAEQVQDLMFNLHMILTDTVKMKEHQEDPEMLMDLMYRIARGYQGSPDLRLTWLQNMAGKHAELGNHAEAAQCMVHAAALVAEYLALLEDSRHLPVGCVSFQNVSSNVLEESAISDDILSPDEEGFCSGKNFTELGLVGLLEQAAGYFTMGGLYEAVNEVYKNLIPILEAHRDYKKLAAVHGKLQEAFTKIMHQSSGWERVFGTYFRVGFYGTRFGDLDEQEFVYKEPSITKLAEISHRLEEFYTERFGDDVVEIIKDSNPVDKSKLDPQKAYIQITYVEPHFDTYELKDRVTYFDRNYGLRAFLFCTPFTPDGRAHGELAEQHKRKTLLSTEHAFPYIKTRIRVCHREETVLTPVEVAIEDMQKKTRELAFATEQDPPDAKMLQMVLQGSVGPTVNQGPLEVAQVFLSEIPEDPKLFRHHNKLRLCFKDFCKKCEDALRKNKALIGPDQKEYHRELERHYSRLREALQPLLTQRLPQLLAPSSTSLRSSMNRSSFRKADL</sequence>
<reference key="1">
    <citation type="journal article" date="2005" name="Science">
        <title>The transcriptional landscape of the mammalian genome.</title>
        <authorList>
            <person name="Carninci P."/>
            <person name="Kasukawa T."/>
            <person name="Katayama S."/>
            <person name="Gough J."/>
            <person name="Frith M.C."/>
            <person name="Maeda N."/>
            <person name="Oyama R."/>
            <person name="Ravasi T."/>
            <person name="Lenhard B."/>
            <person name="Wells C."/>
            <person name="Kodzius R."/>
            <person name="Shimokawa K."/>
            <person name="Bajic V.B."/>
            <person name="Brenner S.E."/>
            <person name="Batalov S."/>
            <person name="Forrest A.R."/>
            <person name="Zavolan M."/>
            <person name="Davis M.J."/>
            <person name="Wilming L.G."/>
            <person name="Aidinis V."/>
            <person name="Allen J.E."/>
            <person name="Ambesi-Impiombato A."/>
            <person name="Apweiler R."/>
            <person name="Aturaliya R.N."/>
            <person name="Bailey T.L."/>
            <person name="Bansal M."/>
            <person name="Baxter L."/>
            <person name="Beisel K.W."/>
            <person name="Bersano T."/>
            <person name="Bono H."/>
            <person name="Chalk A.M."/>
            <person name="Chiu K.P."/>
            <person name="Choudhary V."/>
            <person name="Christoffels A."/>
            <person name="Clutterbuck D.R."/>
            <person name="Crowe M.L."/>
            <person name="Dalla E."/>
            <person name="Dalrymple B.P."/>
            <person name="de Bono B."/>
            <person name="Della Gatta G."/>
            <person name="di Bernardo D."/>
            <person name="Down T."/>
            <person name="Engstrom P."/>
            <person name="Fagiolini M."/>
            <person name="Faulkner G."/>
            <person name="Fletcher C.F."/>
            <person name="Fukushima T."/>
            <person name="Furuno M."/>
            <person name="Futaki S."/>
            <person name="Gariboldi M."/>
            <person name="Georgii-Hemming P."/>
            <person name="Gingeras T.R."/>
            <person name="Gojobori T."/>
            <person name="Green R.E."/>
            <person name="Gustincich S."/>
            <person name="Harbers M."/>
            <person name="Hayashi Y."/>
            <person name="Hensch T.K."/>
            <person name="Hirokawa N."/>
            <person name="Hill D."/>
            <person name="Huminiecki L."/>
            <person name="Iacono M."/>
            <person name="Ikeo K."/>
            <person name="Iwama A."/>
            <person name="Ishikawa T."/>
            <person name="Jakt M."/>
            <person name="Kanapin A."/>
            <person name="Katoh M."/>
            <person name="Kawasawa Y."/>
            <person name="Kelso J."/>
            <person name="Kitamura H."/>
            <person name="Kitano H."/>
            <person name="Kollias G."/>
            <person name="Krishnan S.P."/>
            <person name="Kruger A."/>
            <person name="Kummerfeld S.K."/>
            <person name="Kurochkin I.V."/>
            <person name="Lareau L.F."/>
            <person name="Lazarevic D."/>
            <person name="Lipovich L."/>
            <person name="Liu J."/>
            <person name="Liuni S."/>
            <person name="McWilliam S."/>
            <person name="Madan Babu M."/>
            <person name="Madera M."/>
            <person name="Marchionni L."/>
            <person name="Matsuda H."/>
            <person name="Matsuzawa S."/>
            <person name="Miki H."/>
            <person name="Mignone F."/>
            <person name="Miyake S."/>
            <person name="Morris K."/>
            <person name="Mottagui-Tabar S."/>
            <person name="Mulder N."/>
            <person name="Nakano N."/>
            <person name="Nakauchi H."/>
            <person name="Ng P."/>
            <person name="Nilsson R."/>
            <person name="Nishiguchi S."/>
            <person name="Nishikawa S."/>
            <person name="Nori F."/>
            <person name="Ohara O."/>
            <person name="Okazaki Y."/>
            <person name="Orlando V."/>
            <person name="Pang K.C."/>
            <person name="Pavan W.J."/>
            <person name="Pavesi G."/>
            <person name="Pesole G."/>
            <person name="Petrovsky N."/>
            <person name="Piazza S."/>
            <person name="Reed J."/>
            <person name="Reid J.F."/>
            <person name="Ring B.Z."/>
            <person name="Ringwald M."/>
            <person name="Rost B."/>
            <person name="Ruan Y."/>
            <person name="Salzberg S.L."/>
            <person name="Sandelin A."/>
            <person name="Schneider C."/>
            <person name="Schoenbach C."/>
            <person name="Sekiguchi K."/>
            <person name="Semple C.A."/>
            <person name="Seno S."/>
            <person name="Sessa L."/>
            <person name="Sheng Y."/>
            <person name="Shibata Y."/>
            <person name="Shimada H."/>
            <person name="Shimada K."/>
            <person name="Silva D."/>
            <person name="Sinclair B."/>
            <person name="Sperling S."/>
            <person name="Stupka E."/>
            <person name="Sugiura K."/>
            <person name="Sultana R."/>
            <person name="Takenaka Y."/>
            <person name="Taki K."/>
            <person name="Tammoja K."/>
            <person name="Tan S.L."/>
            <person name="Tang S."/>
            <person name="Taylor M.S."/>
            <person name="Tegner J."/>
            <person name="Teichmann S.A."/>
            <person name="Ueda H.R."/>
            <person name="van Nimwegen E."/>
            <person name="Verardo R."/>
            <person name="Wei C.L."/>
            <person name="Yagi K."/>
            <person name="Yamanishi H."/>
            <person name="Zabarovsky E."/>
            <person name="Zhu S."/>
            <person name="Zimmer A."/>
            <person name="Hide W."/>
            <person name="Bult C."/>
            <person name="Grimmond S.M."/>
            <person name="Teasdale R.D."/>
            <person name="Liu E.T."/>
            <person name="Brusic V."/>
            <person name="Quackenbush J."/>
            <person name="Wahlestedt C."/>
            <person name="Mattick J.S."/>
            <person name="Hume D.A."/>
            <person name="Kai C."/>
            <person name="Sasaki D."/>
            <person name="Tomaru Y."/>
            <person name="Fukuda S."/>
            <person name="Kanamori-Katayama M."/>
            <person name="Suzuki M."/>
            <person name="Aoki J."/>
            <person name="Arakawa T."/>
            <person name="Iida J."/>
            <person name="Imamura K."/>
            <person name="Itoh M."/>
            <person name="Kato T."/>
            <person name="Kawaji H."/>
            <person name="Kawagashira N."/>
            <person name="Kawashima T."/>
            <person name="Kojima M."/>
            <person name="Kondo S."/>
            <person name="Konno H."/>
            <person name="Nakano K."/>
            <person name="Ninomiya N."/>
            <person name="Nishio T."/>
            <person name="Okada M."/>
            <person name="Plessy C."/>
            <person name="Shibata K."/>
            <person name="Shiraki T."/>
            <person name="Suzuki S."/>
            <person name="Tagami M."/>
            <person name="Waki K."/>
            <person name="Watahiki A."/>
            <person name="Okamura-Oho Y."/>
            <person name="Suzuki H."/>
            <person name="Kawai J."/>
            <person name="Hayashizaki Y."/>
        </authorList>
    </citation>
    <scope>NUCLEOTIDE SEQUENCE [LARGE SCALE MRNA] (ISOFORMS 2 AND 3)</scope>
    <scope>NUCLEOTIDE SEQUENCE [LARGE SCALE MRNA] OF 1871-2080 (ISOFORM 1)</scope>
    <source>
        <strain>C57BL/6J</strain>
        <tissue>Aorta</tissue>
        <tissue>Mammary gland</tissue>
        <tissue>Testis</tissue>
    </source>
</reference>
<reference key="2">
    <citation type="journal article" date="2009" name="PLoS Biol.">
        <title>Lineage-specific biology revealed by a finished genome assembly of the mouse.</title>
        <authorList>
            <person name="Church D.M."/>
            <person name="Goodstadt L."/>
            <person name="Hillier L.W."/>
            <person name="Zody M.C."/>
            <person name="Goldstein S."/>
            <person name="She X."/>
            <person name="Bult C.J."/>
            <person name="Agarwala R."/>
            <person name="Cherry J.L."/>
            <person name="DiCuccio M."/>
            <person name="Hlavina W."/>
            <person name="Kapustin Y."/>
            <person name="Meric P."/>
            <person name="Maglott D."/>
            <person name="Birtle Z."/>
            <person name="Marques A.C."/>
            <person name="Graves T."/>
            <person name="Zhou S."/>
            <person name="Teague B."/>
            <person name="Potamousis K."/>
            <person name="Churas C."/>
            <person name="Place M."/>
            <person name="Herschleb J."/>
            <person name="Runnheim R."/>
            <person name="Forrest D."/>
            <person name="Amos-Landgraf J."/>
            <person name="Schwartz D.C."/>
            <person name="Cheng Z."/>
            <person name="Lindblad-Toh K."/>
            <person name="Eichler E.E."/>
            <person name="Ponting C.P."/>
        </authorList>
    </citation>
    <scope>NUCLEOTIDE SEQUENCE [LARGE SCALE GENOMIC DNA]</scope>
    <source>
        <strain>C57BL/6J</strain>
    </source>
</reference>
<reference key="3">
    <citation type="journal article" date="2004" name="Genome Res.">
        <title>The status, quality, and expansion of the NIH full-length cDNA project: the Mammalian Gene Collection (MGC).</title>
        <authorList>
            <consortium name="The MGC Project Team"/>
        </authorList>
    </citation>
    <scope>NUCLEOTIDE SEQUENCE [LARGE SCALE MRNA] OF 746-2080 (ISOFORM 1)</scope>
    <source>
        <strain>C57BL/6J</strain>
        <tissue>Brain</tissue>
        <tissue>Mammary tumor</tissue>
    </source>
</reference>
<reference key="4">
    <citation type="journal article" date="2007" name="Exp. Cell Res.">
        <title>Dock6, a Dock-C subfamily guanine nucleotide exchanger, has the dual specificity for Rac1 and Cdc42 and regulates neurite outgrowth.</title>
        <authorList>
            <person name="Miyamoto Y."/>
            <person name="Yamauchi J."/>
            <person name="Sanbe A."/>
            <person name="Tanoue A."/>
        </authorList>
    </citation>
    <scope>INDUCTION</scope>
</reference>
<reference key="5">
    <citation type="journal article" date="2007" name="Proc. Natl. Acad. Sci. U.S.A.">
        <title>Large-scale phosphorylation analysis of mouse liver.</title>
        <authorList>
            <person name="Villen J."/>
            <person name="Beausoleil S.A."/>
            <person name="Gerber S.A."/>
            <person name="Gygi S.P."/>
        </authorList>
    </citation>
    <scope>IDENTIFICATION BY MASS SPECTROMETRY [LARGE SCALE ANALYSIS]</scope>
    <source>
        <tissue>Liver</tissue>
    </source>
</reference>
<reference key="6">
    <citation type="journal article" date="2010" name="Cell">
        <title>A tissue-specific atlas of mouse protein phosphorylation and expression.</title>
        <authorList>
            <person name="Huttlin E.L."/>
            <person name="Jedrychowski M.P."/>
            <person name="Elias J.E."/>
            <person name="Goswami T."/>
            <person name="Rad R."/>
            <person name="Beausoleil S.A."/>
            <person name="Villen J."/>
            <person name="Haas W."/>
            <person name="Sowa M.E."/>
            <person name="Gygi S.P."/>
        </authorList>
    </citation>
    <scope>PHOSPHORYLATION [LARGE SCALE ANALYSIS] AT SER-178; SER-870; SER-878; SER-882; THR-2064 AND SER-2065</scope>
    <scope>IDENTIFICATION BY MASS SPECTROMETRY [LARGE SCALE ANALYSIS]</scope>
    <source>
        <tissue>Brain</tissue>
        <tissue>Brown adipose tissue</tissue>
        <tissue>Heart</tissue>
        <tissue>Kidney</tissue>
        <tissue>Liver</tissue>
        <tissue>Lung</tissue>
        <tissue>Pancreas</tissue>
        <tissue>Spleen</tissue>
        <tissue>Testis</tissue>
    </source>
</reference>
<reference key="7">
    <citation type="journal article" date="2011" name="Am. J. Hum. Genet.">
        <title>Recessive mutations in DOCK6, encoding the guanidine nucleotide exchange factor DOCK6, lead to abnormal actin cytoskeleton organization and Adams-Oliver syndrome.</title>
        <authorList>
            <person name="Shaheen R."/>
            <person name="Faqeih E."/>
            <person name="Sunker A."/>
            <person name="Morsy H."/>
            <person name="Al-Sheddi T."/>
            <person name="Shamseldin H.E."/>
            <person name="Adly N."/>
            <person name="Hashem M."/>
            <person name="Alkuraya F.S."/>
        </authorList>
    </citation>
    <scope>TISSUE SPECIFICITY</scope>
    <scope>DEVELOPMENTAL STAGE</scope>
</reference>
<reference key="8">
    <citation type="journal article" date="2014" name="Mol. Cell. Proteomics">
        <title>Immunoaffinity enrichment and mass spectrometry analysis of protein methylation.</title>
        <authorList>
            <person name="Guo A."/>
            <person name="Gu H."/>
            <person name="Zhou J."/>
            <person name="Mulhern D."/>
            <person name="Wang Y."/>
            <person name="Lee K.A."/>
            <person name="Yang V."/>
            <person name="Aguiar M."/>
            <person name="Kornhauser J."/>
            <person name="Jia X."/>
            <person name="Ren J."/>
            <person name="Beausoleil S.A."/>
            <person name="Silva J.C."/>
            <person name="Vemulapalli V."/>
            <person name="Bedford M.T."/>
            <person name="Comb M.J."/>
        </authorList>
    </citation>
    <scope>METHYLATION [LARGE SCALE ANALYSIS] AT ARG-863</scope>
    <scope>IDENTIFICATION BY MASS SPECTROMETRY [LARGE SCALE ANALYSIS]</scope>
    <source>
        <tissue>Embryo</tissue>
    </source>
</reference>
<proteinExistence type="evidence at protein level"/>
<accession>Q8VDR9</accession>
<accession>E9QKQ0</accession>
<accession>Q3UM59</accession>
<accession>Q6PFY0</accession>
<accession>Q8BJS1</accession>
<accession>Q9D461</accession>
<comment type="function">
    <text evidence="1">Acts as a guanine nucleotide exchange factor (GEF) for CDC42 and RAC1 small GTPases (By similarity). Through its activation of CDC42 and RAC1, regulates neurite outgrowth in an vitro differentiation system.</text>
</comment>
<comment type="subcellular location">
    <subcellularLocation>
        <location evidence="1">Cytoplasm</location>
    </subcellularLocation>
    <subcellularLocation>
        <location evidence="1">Cytoplasm</location>
        <location evidence="1">Perinuclear region</location>
    </subcellularLocation>
    <text evidence="1">Mainly located near the cell surface.</text>
</comment>
<comment type="alternative products">
    <event type="alternative splicing"/>
    <isoform>
        <id>Q8VDR9-1</id>
        <name>1</name>
        <sequence type="displayed"/>
    </isoform>
    <isoform>
        <id>Q8VDR9-2</id>
        <name>2</name>
        <sequence type="described" ref="VSP_022259 VSP_022260 VSP_022261"/>
    </isoform>
    <isoform>
        <id>Q8VDR9-3</id>
        <name>3</name>
        <sequence type="described" ref="VSP_022257 VSP_022258"/>
    </isoform>
</comment>
<comment type="tissue specificity">
    <text evidence="7">Widely expressed with highest levels in lung and heart.</text>
</comment>
<comment type="developmental stage">
    <text evidence="7">Expressed at 9.5 dpc in the growing edge of the limb buds and in the developing heart. At 10.5 dpc, strongly expressed at the edge of the limb buds, while expression in the heart maintained. At 11.5 dpc, detected in the apical ectodermal ridge of all 4 limbs, with higher expression in hindlimbs than in forelimbs. By 12.5 and 13.5 dpc, expression pattern more diffused in the limbs. At 13.5 dpc, clearly observed in the developing digits.</text>
</comment>
<comment type="induction">
    <text evidence="6">Up-regulated during differentiation of the N1E-115 neuroblastoma cell line.</text>
</comment>
<comment type="domain">
    <text evidence="1">The DOCKER domain may mediate some GEF activity.</text>
</comment>
<comment type="similarity">
    <text evidence="3">Belongs to the DOCK family.</text>
</comment>
<comment type="sequence caution" evidence="9">
    <conflict type="erroneous initiation">
        <sequence resource="EMBL-CDS" id="AAH21414"/>
    </conflict>
    <text>Extended N-terminus.</text>
</comment>
<comment type="sequence caution" evidence="9">
    <conflict type="miscellaneous discrepancy">
        <sequence resource="EMBL-CDS" id="AAH21414"/>
    </conflict>
    <text>Contaminating sequence. Vector contamination at the N-terminus.</text>
</comment>
<comment type="sequence caution" evidence="9">
    <conflict type="frameshift">
        <sequence resource="EMBL-CDS" id="BAC37843"/>
    </conflict>
</comment>
<evidence type="ECO:0000250" key="1"/>
<evidence type="ECO:0000250" key="2">
    <source>
        <dbReference type="UniProtKB" id="Q96HP0"/>
    </source>
</evidence>
<evidence type="ECO:0000255" key="3">
    <source>
        <dbReference type="PROSITE-ProRule" id="PRU00983"/>
    </source>
</evidence>
<evidence type="ECO:0000255" key="4">
    <source>
        <dbReference type="PROSITE-ProRule" id="PRU00984"/>
    </source>
</evidence>
<evidence type="ECO:0000256" key="5">
    <source>
        <dbReference type="SAM" id="MobiDB-lite"/>
    </source>
</evidence>
<evidence type="ECO:0000269" key="6">
    <source>
    </source>
</evidence>
<evidence type="ECO:0000269" key="7">
    <source>
    </source>
</evidence>
<evidence type="ECO:0000303" key="8">
    <source>
    </source>
</evidence>
<evidence type="ECO:0000305" key="9"/>
<evidence type="ECO:0007744" key="10">
    <source>
    </source>
</evidence>
<evidence type="ECO:0007744" key="11">
    <source>
    </source>
</evidence>
<keyword id="KW-0025">Alternative splicing</keyword>
<keyword id="KW-0963">Cytoplasm</keyword>
<keyword id="KW-0344">Guanine-nucleotide releasing factor</keyword>
<keyword id="KW-0488">Methylation</keyword>
<keyword id="KW-0597">Phosphoprotein</keyword>
<keyword id="KW-1185">Reference proteome</keyword>
<gene>
    <name type="primary">Dock6</name>
    <name type="synonym">Kiaa1395</name>
</gene>
<organism>
    <name type="scientific">Mus musculus</name>
    <name type="common">Mouse</name>
    <dbReference type="NCBI Taxonomy" id="10090"/>
    <lineage>
        <taxon>Eukaryota</taxon>
        <taxon>Metazoa</taxon>
        <taxon>Chordata</taxon>
        <taxon>Craniata</taxon>
        <taxon>Vertebrata</taxon>
        <taxon>Euteleostomi</taxon>
        <taxon>Mammalia</taxon>
        <taxon>Eutheria</taxon>
        <taxon>Euarchontoglires</taxon>
        <taxon>Glires</taxon>
        <taxon>Rodentia</taxon>
        <taxon>Myomorpha</taxon>
        <taxon>Muroidea</taxon>
        <taxon>Muridae</taxon>
        <taxon>Murinae</taxon>
        <taxon>Mus</taxon>
        <taxon>Mus</taxon>
    </lineage>
</organism>
<feature type="chain" id="PRO_0000189994" description="Dedicator of cytokinesis protein 6">
    <location>
        <begin position="1"/>
        <end position="2080"/>
    </location>
</feature>
<feature type="domain" description="C2 DOCK-type" evidence="3">
    <location>
        <begin position="546"/>
        <end position="712"/>
    </location>
</feature>
<feature type="domain" description="DOCKER" evidence="4">
    <location>
        <begin position="1620"/>
        <end position="2056"/>
    </location>
</feature>
<feature type="region of interest" description="Disordered" evidence="5">
    <location>
        <begin position="20"/>
        <end position="44"/>
    </location>
</feature>
<feature type="region of interest" description="Disordered" evidence="5">
    <location>
        <begin position="156"/>
        <end position="189"/>
    </location>
</feature>
<feature type="region of interest" description="Disordered" evidence="5">
    <location>
        <begin position="408"/>
        <end position="441"/>
    </location>
</feature>
<feature type="region of interest" description="Disordered" evidence="5">
    <location>
        <begin position="1101"/>
        <end position="1123"/>
    </location>
</feature>
<feature type="compositionally biased region" description="Basic and acidic residues" evidence="5">
    <location>
        <begin position="20"/>
        <end position="31"/>
    </location>
</feature>
<feature type="compositionally biased region" description="Low complexity" evidence="5">
    <location>
        <begin position="32"/>
        <end position="42"/>
    </location>
</feature>
<feature type="compositionally biased region" description="Basic and acidic residues" evidence="5">
    <location>
        <begin position="408"/>
        <end position="425"/>
    </location>
</feature>
<feature type="compositionally biased region" description="Low complexity" evidence="5">
    <location>
        <begin position="1104"/>
        <end position="1122"/>
    </location>
</feature>
<feature type="modified residue" description="Phosphoserine" evidence="10">
    <location>
        <position position="178"/>
    </location>
</feature>
<feature type="modified residue" description="Omega-N-methylarginine" evidence="11">
    <location>
        <position position="863"/>
    </location>
</feature>
<feature type="modified residue" description="Phosphoserine" evidence="10">
    <location>
        <position position="870"/>
    </location>
</feature>
<feature type="modified residue" description="Phosphoserine" evidence="10">
    <location>
        <position position="878"/>
    </location>
</feature>
<feature type="modified residue" description="Phosphoserine" evidence="10">
    <location>
        <position position="882"/>
    </location>
</feature>
<feature type="modified residue" description="Phosphoserine" evidence="2">
    <location>
        <position position="1341"/>
    </location>
</feature>
<feature type="modified residue" description="Phosphothreonine" evidence="10">
    <location>
        <position position="2064"/>
    </location>
</feature>
<feature type="modified residue" description="Phosphoserine" evidence="10">
    <location>
        <position position="2065"/>
    </location>
</feature>
<feature type="modified residue" description="Phosphoserine" evidence="2">
    <location>
        <position position="2069"/>
    </location>
</feature>
<feature type="splice variant" id="VSP_022257" description="In isoform 3." evidence="8">
    <original>DEAV</original>
    <variation>VGAY</variation>
    <location>
        <begin position="241"/>
        <end position="244"/>
    </location>
</feature>
<feature type="splice variant" id="VSP_022258" description="In isoform 3." evidence="8">
    <location>
        <begin position="245"/>
        <end position="2080"/>
    </location>
</feature>
<feature type="splice variant" id="VSP_022259" description="In isoform 2." evidence="8">
    <location>
        <begin position="905"/>
        <end position="939"/>
    </location>
</feature>
<feature type="splice variant" id="VSP_022260" description="In isoform 2." evidence="8">
    <original>DMKLAERLNASLAFFLSDLLSIADRGYIFSLVRAHYKQVATRLQ</original>
    <variation>VRKDSAQGCSVVRDPVCHVGLFIHGLFLEHLWFTWPWLDVETQL</variation>
    <location>
        <begin position="1019"/>
        <end position="1062"/>
    </location>
</feature>
<feature type="splice variant" id="VSP_022261" description="In isoform 2." evidence="8">
    <location>
        <begin position="1063"/>
        <end position="2080"/>
    </location>
</feature>
<feature type="sequence conflict" description="In Ref. 1; BAE26239." evidence="9" ref="1">
    <original>W</original>
    <variation>R</variation>
    <location>
        <position position="145"/>
    </location>
</feature>
<protein>
    <recommendedName>
        <fullName>Dedicator of cytokinesis protein 6</fullName>
    </recommendedName>
</protein>
<name>DOCK6_MOUSE</name>
<dbReference type="EMBL" id="AK016777">
    <property type="protein sequence ID" value="BAB30423.2"/>
    <property type="molecule type" value="mRNA"/>
</dbReference>
<dbReference type="EMBL" id="AK080190">
    <property type="protein sequence ID" value="BAC37843.1"/>
    <property type="status" value="ALT_FRAME"/>
    <property type="molecule type" value="mRNA"/>
</dbReference>
<dbReference type="EMBL" id="AK145109">
    <property type="protein sequence ID" value="BAE26239.1"/>
    <property type="molecule type" value="mRNA"/>
</dbReference>
<dbReference type="EMBL" id="AC161371">
    <property type="status" value="NOT_ANNOTATED_CDS"/>
    <property type="molecule type" value="Genomic_DNA"/>
</dbReference>
<dbReference type="EMBL" id="AC166992">
    <property type="status" value="NOT_ANNOTATED_CDS"/>
    <property type="molecule type" value="Genomic_DNA"/>
</dbReference>
<dbReference type="EMBL" id="BC021414">
    <property type="protein sequence ID" value="AAH21414.1"/>
    <property type="status" value="ALT_INIT"/>
    <property type="molecule type" value="mRNA"/>
</dbReference>
<dbReference type="EMBL" id="BC043042">
    <property type="protein sequence ID" value="AAH43042.1"/>
    <property type="molecule type" value="mRNA"/>
</dbReference>
<dbReference type="EMBL" id="BC057368">
    <property type="protein sequence ID" value="AAH57368.2"/>
    <property type="molecule type" value="mRNA"/>
</dbReference>
<dbReference type="RefSeq" id="NP_001400841.1">
    <molecule id="Q8VDR9-1"/>
    <property type="nucleotide sequence ID" value="NM_001413912.1"/>
</dbReference>
<dbReference type="RefSeq" id="NP_796004.2">
    <property type="nucleotide sequence ID" value="NM_177030.3"/>
</dbReference>
<dbReference type="RefSeq" id="XP_011240856.1">
    <property type="nucleotide sequence ID" value="XM_011242554.2"/>
</dbReference>
<dbReference type="SMR" id="Q8VDR9"/>
<dbReference type="BioGRID" id="235607">
    <property type="interactions" value="3"/>
</dbReference>
<dbReference type="FunCoup" id="Q8VDR9">
    <property type="interactions" value="908"/>
</dbReference>
<dbReference type="STRING" id="10090.ENSMUSP00000149156"/>
<dbReference type="GlyGen" id="Q8VDR9">
    <property type="glycosylation" value="3 sites, 1 N-linked glycan (1 site), 1 O-linked glycan (1 site)"/>
</dbReference>
<dbReference type="iPTMnet" id="Q8VDR9"/>
<dbReference type="PhosphoSitePlus" id="Q8VDR9"/>
<dbReference type="jPOST" id="Q8VDR9"/>
<dbReference type="PaxDb" id="10090-ENSMUSP00000034728"/>
<dbReference type="PeptideAtlas" id="Q8VDR9"/>
<dbReference type="ProteomicsDB" id="279755">
    <molecule id="Q8VDR9-1"/>
</dbReference>
<dbReference type="ProteomicsDB" id="279756">
    <molecule id="Q8VDR9-2"/>
</dbReference>
<dbReference type="ProteomicsDB" id="279757">
    <molecule id="Q8VDR9-3"/>
</dbReference>
<dbReference type="Pumba" id="Q8VDR9"/>
<dbReference type="Antibodypedia" id="69705">
    <property type="antibodies" value="39 antibodies from 12 providers"/>
</dbReference>
<dbReference type="Ensembl" id="ENSMUST00000034728.9">
    <molecule id="Q8VDR9-1"/>
    <property type="protein sequence ID" value="ENSMUSP00000034728.9"/>
    <property type="gene ID" value="ENSMUSG00000032198.10"/>
</dbReference>
<dbReference type="GeneID" id="319899"/>
<dbReference type="KEGG" id="mmu:319899"/>
<dbReference type="UCSC" id="uc009omn.1">
    <molecule id="Q8VDR9-1"/>
    <property type="organism name" value="mouse"/>
</dbReference>
<dbReference type="UCSC" id="uc009omq.1">
    <molecule id="Q8VDR9-2"/>
    <property type="organism name" value="mouse"/>
</dbReference>
<dbReference type="UCSC" id="uc009omt.1">
    <molecule id="Q8VDR9-3"/>
    <property type="organism name" value="mouse"/>
</dbReference>
<dbReference type="AGR" id="MGI:1914789"/>
<dbReference type="CTD" id="57572"/>
<dbReference type="MGI" id="MGI:1914789">
    <property type="gene designation" value="Dock6"/>
</dbReference>
<dbReference type="VEuPathDB" id="HostDB:ENSMUSG00000032198"/>
<dbReference type="eggNOG" id="KOG1997">
    <property type="taxonomic scope" value="Eukaryota"/>
</dbReference>
<dbReference type="GeneTree" id="ENSGT00940000159313"/>
<dbReference type="InParanoid" id="Q8VDR9"/>
<dbReference type="OrthoDB" id="47328at2759"/>
<dbReference type="Reactome" id="R-MMU-9013148">
    <property type="pathway name" value="CDC42 GTPase cycle"/>
</dbReference>
<dbReference type="Reactome" id="R-MMU-9013149">
    <property type="pathway name" value="RAC1 GTPase cycle"/>
</dbReference>
<dbReference type="Reactome" id="R-MMU-983231">
    <property type="pathway name" value="Factors involved in megakaryocyte development and platelet production"/>
</dbReference>
<dbReference type="BioGRID-ORCS" id="319899">
    <property type="hits" value="4 hits in 78 CRISPR screens"/>
</dbReference>
<dbReference type="ChiTaRS" id="Dock6">
    <property type="organism name" value="mouse"/>
</dbReference>
<dbReference type="PRO" id="PR:Q8VDR9"/>
<dbReference type="Proteomes" id="UP000000589">
    <property type="component" value="Chromosome 9"/>
</dbReference>
<dbReference type="RNAct" id="Q8VDR9">
    <property type="molecule type" value="protein"/>
</dbReference>
<dbReference type="Bgee" id="ENSMUSG00000032198">
    <property type="expression patterns" value="Expressed in dorsal pancreas and 208 other cell types or tissues"/>
</dbReference>
<dbReference type="ExpressionAtlas" id="Q8VDR9">
    <property type="expression patterns" value="baseline and differential"/>
</dbReference>
<dbReference type="GO" id="GO:0048471">
    <property type="term" value="C:perinuclear region of cytoplasm"/>
    <property type="evidence" value="ECO:0007669"/>
    <property type="project" value="UniProtKB-SubCell"/>
</dbReference>
<dbReference type="GO" id="GO:0005085">
    <property type="term" value="F:guanyl-nucleotide exchange factor activity"/>
    <property type="evidence" value="ECO:0007669"/>
    <property type="project" value="UniProtKB-KW"/>
</dbReference>
<dbReference type="GO" id="GO:0007264">
    <property type="term" value="P:small GTPase-mediated signal transduction"/>
    <property type="evidence" value="ECO:0007669"/>
    <property type="project" value="InterPro"/>
</dbReference>
<dbReference type="CDD" id="cd08696">
    <property type="entry name" value="C2_Dock-C"/>
    <property type="match status" value="1"/>
</dbReference>
<dbReference type="FunFam" id="1.20.58.740:FF:000002">
    <property type="entry name" value="Dedicator of cytokinesis protein 7"/>
    <property type="match status" value="1"/>
</dbReference>
<dbReference type="FunFam" id="1.25.40.410:FF:000002">
    <property type="entry name" value="Dedicator of cytokinesis protein 7"/>
    <property type="match status" value="1"/>
</dbReference>
<dbReference type="FunFam" id="2.60.40.150:FF:000022">
    <property type="entry name" value="Dedicator of cytokinesis protein 7"/>
    <property type="match status" value="1"/>
</dbReference>
<dbReference type="Gene3D" id="1.20.58.740">
    <property type="match status" value="1"/>
</dbReference>
<dbReference type="Gene3D" id="1.25.40.410">
    <property type="match status" value="1"/>
</dbReference>
<dbReference type="Gene3D" id="2.60.40.150">
    <property type="entry name" value="C2 domain"/>
    <property type="match status" value="1"/>
</dbReference>
<dbReference type="InterPro" id="IPR037808">
    <property type="entry name" value="C2_Dock-C"/>
</dbReference>
<dbReference type="InterPro" id="IPR027007">
    <property type="entry name" value="C2_DOCK-type_domain"/>
</dbReference>
<dbReference type="InterPro" id="IPR035892">
    <property type="entry name" value="C2_domain_sf"/>
</dbReference>
<dbReference type="InterPro" id="IPR026791">
    <property type="entry name" value="DOCK"/>
</dbReference>
<dbReference type="InterPro" id="IPR021816">
    <property type="entry name" value="DOCK_C/D_N"/>
</dbReference>
<dbReference type="InterPro" id="IPR043161">
    <property type="entry name" value="DOCK_C_lobe_A"/>
</dbReference>
<dbReference type="InterPro" id="IPR043162">
    <property type="entry name" value="DOCK_C_lobe_C"/>
</dbReference>
<dbReference type="InterPro" id="IPR027357">
    <property type="entry name" value="DOCKER_dom"/>
</dbReference>
<dbReference type="InterPro" id="IPR046769">
    <property type="entry name" value="DOCKER_Lobe_A"/>
</dbReference>
<dbReference type="InterPro" id="IPR046770">
    <property type="entry name" value="DOCKER_Lobe_B"/>
</dbReference>
<dbReference type="InterPro" id="IPR046773">
    <property type="entry name" value="DOCKER_Lobe_C"/>
</dbReference>
<dbReference type="PANTHER" id="PTHR23317">
    <property type="entry name" value="DEDICATOR OF CYTOKINESIS DOCK"/>
    <property type="match status" value="1"/>
</dbReference>
<dbReference type="PANTHER" id="PTHR23317:SF65">
    <property type="entry name" value="DEDICATOR OF CYTOKINESIS PROTEIN 6"/>
    <property type="match status" value="1"/>
</dbReference>
<dbReference type="Pfam" id="PF06920">
    <property type="entry name" value="DHR-2_Lobe_A"/>
    <property type="match status" value="1"/>
</dbReference>
<dbReference type="Pfam" id="PF20422">
    <property type="entry name" value="DHR-2_Lobe_B"/>
    <property type="match status" value="1"/>
</dbReference>
<dbReference type="Pfam" id="PF20421">
    <property type="entry name" value="DHR-2_Lobe_C"/>
    <property type="match status" value="1"/>
</dbReference>
<dbReference type="Pfam" id="PF14429">
    <property type="entry name" value="DOCK-C2"/>
    <property type="match status" value="1"/>
</dbReference>
<dbReference type="Pfam" id="PF11878">
    <property type="entry name" value="DOCK_C-D_N"/>
    <property type="match status" value="1"/>
</dbReference>
<dbReference type="PROSITE" id="PS51650">
    <property type="entry name" value="C2_DOCK"/>
    <property type="match status" value="1"/>
</dbReference>
<dbReference type="PROSITE" id="PS51651">
    <property type="entry name" value="DOCKER"/>
    <property type="match status" value="1"/>
</dbReference>